<keyword id="KW-0378">Hydrolase</keyword>
<keyword id="KW-0464">Manganese</keyword>
<keyword id="KW-0479">Metal-binding</keyword>
<comment type="cofactor">
    <cofactor evidence="2">
        <name>Mn(2+)</name>
        <dbReference type="ChEBI" id="CHEBI:29035"/>
    </cofactor>
    <text evidence="2">Binds 2 manganese ions per subunit.</text>
</comment>
<comment type="similarity">
    <text evidence="2">Belongs to the peptidase M24B family.</text>
</comment>
<comment type="sequence caution" evidence="2">
    <conflict type="erroneous initiation">
        <sequence resource="EMBL-CDS" id="BAB57870"/>
    </conflict>
</comment>
<gene>
    <name type="ordered locus">SAV1708</name>
</gene>
<evidence type="ECO:0000255" key="1"/>
<evidence type="ECO:0000305" key="2"/>
<sequence>MTKISKIIDELNNQQADAAWITTPLNVYYFTGYRSEPHERLFALLIKKDGKQVLFCPKMEVEEVKASPFTGEIVGYLDTENPFSLYPQTINKLLIESEHLTVARQKQLISGFNVNSFGDVDLTIKQLRNIKSEDEISKIRKAAELADKCIEIGVSYLKEGVTEREVVNHIEQTIKQYGVNEMSFDTMVLFGDHAASPHGTPGDRRLKSNEYVLFDLGVIYEHYCSDMTRTIKFGEPSKEAQEIYNIVLEAETSAIQAIKPGIPLKDIDHIARNIISEKGYGEYFPHRLGHGLGLQEHEYQDVSSTNSNLLEAGMVITIEPGIYVPGVAGVRIEDDILVTNEGYEVLTHYEK</sequence>
<proteinExistence type="inferred from homology"/>
<protein>
    <recommendedName>
        <fullName>Uncharacterized peptidase SAV1708</fullName>
        <ecNumber>3.4.-.-</ecNumber>
    </recommendedName>
</protein>
<dbReference type="EC" id="3.4.-.-"/>
<dbReference type="EMBL" id="BA000017">
    <property type="protein sequence ID" value="BAB57870.1"/>
    <property type="status" value="ALT_INIT"/>
    <property type="molecule type" value="Genomic_DNA"/>
</dbReference>
<dbReference type="RefSeq" id="WP_000161666.1">
    <property type="nucleotide sequence ID" value="NC_002758.2"/>
</dbReference>
<dbReference type="SMR" id="Q99TF5"/>
<dbReference type="KEGG" id="sav:SAV1708"/>
<dbReference type="HOGENOM" id="CLU_017266_4_2_9"/>
<dbReference type="Proteomes" id="UP000002481">
    <property type="component" value="Chromosome"/>
</dbReference>
<dbReference type="GO" id="GO:0016787">
    <property type="term" value="F:hydrolase activity"/>
    <property type="evidence" value="ECO:0007669"/>
    <property type="project" value="UniProtKB-KW"/>
</dbReference>
<dbReference type="GO" id="GO:0046872">
    <property type="term" value="F:metal ion binding"/>
    <property type="evidence" value="ECO:0007669"/>
    <property type="project" value="UniProtKB-KW"/>
</dbReference>
<dbReference type="CDD" id="cd01092">
    <property type="entry name" value="APP-like"/>
    <property type="match status" value="1"/>
</dbReference>
<dbReference type="FunFam" id="3.90.230.10:FF:000014">
    <property type="entry name" value="Aminopeptidase P family protein"/>
    <property type="match status" value="1"/>
</dbReference>
<dbReference type="Gene3D" id="3.90.230.10">
    <property type="entry name" value="Creatinase/methionine aminopeptidase superfamily"/>
    <property type="match status" value="1"/>
</dbReference>
<dbReference type="Gene3D" id="3.40.350.10">
    <property type="entry name" value="Creatinase/prolidase N-terminal domain"/>
    <property type="match status" value="1"/>
</dbReference>
<dbReference type="InterPro" id="IPR029149">
    <property type="entry name" value="Creatin/AminoP/Spt16_N"/>
</dbReference>
<dbReference type="InterPro" id="IPR036005">
    <property type="entry name" value="Creatinase/aminopeptidase-like"/>
</dbReference>
<dbReference type="InterPro" id="IPR000587">
    <property type="entry name" value="Creatinase_N"/>
</dbReference>
<dbReference type="InterPro" id="IPR000994">
    <property type="entry name" value="Pept_M24"/>
</dbReference>
<dbReference type="InterPro" id="IPR050659">
    <property type="entry name" value="Peptidase_M24B"/>
</dbReference>
<dbReference type="InterPro" id="IPR001131">
    <property type="entry name" value="Peptidase_M24B_aminopep-P_CS"/>
</dbReference>
<dbReference type="PANTHER" id="PTHR46112">
    <property type="entry name" value="AMINOPEPTIDASE"/>
    <property type="match status" value="1"/>
</dbReference>
<dbReference type="PANTHER" id="PTHR46112:SF10">
    <property type="entry name" value="DIPEPTIDASE YKVY-RELATED"/>
    <property type="match status" value="1"/>
</dbReference>
<dbReference type="Pfam" id="PF01321">
    <property type="entry name" value="Creatinase_N"/>
    <property type="match status" value="1"/>
</dbReference>
<dbReference type="Pfam" id="PF00557">
    <property type="entry name" value="Peptidase_M24"/>
    <property type="match status" value="1"/>
</dbReference>
<dbReference type="SUPFAM" id="SSF55920">
    <property type="entry name" value="Creatinase/aminopeptidase"/>
    <property type="match status" value="1"/>
</dbReference>
<dbReference type="SUPFAM" id="SSF53092">
    <property type="entry name" value="Creatinase/prolidase N-terminal domain"/>
    <property type="match status" value="1"/>
</dbReference>
<dbReference type="PROSITE" id="PS00491">
    <property type="entry name" value="PROLINE_PEPTIDASE"/>
    <property type="match status" value="1"/>
</dbReference>
<feature type="chain" id="PRO_0000299423" description="Uncharacterized peptidase SAV1708">
    <location>
        <begin position="1"/>
        <end position="351"/>
    </location>
</feature>
<feature type="binding site" evidence="1">
    <location>
        <position position="215"/>
    </location>
    <ligand>
        <name>Mn(2+)</name>
        <dbReference type="ChEBI" id="CHEBI:29035"/>
        <label>2</label>
    </ligand>
</feature>
<feature type="binding site" evidence="1">
    <location>
        <position position="226"/>
    </location>
    <ligand>
        <name>Mn(2+)</name>
        <dbReference type="ChEBI" id="CHEBI:29035"/>
        <label>1</label>
    </ligand>
</feature>
<feature type="binding site" evidence="1">
    <location>
        <position position="226"/>
    </location>
    <ligand>
        <name>Mn(2+)</name>
        <dbReference type="ChEBI" id="CHEBI:29035"/>
        <label>2</label>
    </ligand>
</feature>
<feature type="binding site" evidence="1">
    <location>
        <position position="290"/>
    </location>
    <ligand>
        <name>Mn(2+)</name>
        <dbReference type="ChEBI" id="CHEBI:29035"/>
        <label>1</label>
    </ligand>
</feature>
<feature type="binding site" evidence="1">
    <location>
        <position position="319"/>
    </location>
    <ligand>
        <name>Mn(2+)</name>
        <dbReference type="ChEBI" id="CHEBI:29035"/>
        <label>1</label>
    </ligand>
</feature>
<feature type="binding site" evidence="1">
    <location>
        <position position="333"/>
    </location>
    <ligand>
        <name>Mn(2+)</name>
        <dbReference type="ChEBI" id="CHEBI:29035"/>
        <label>1</label>
    </ligand>
</feature>
<feature type="binding site" evidence="1">
    <location>
        <position position="333"/>
    </location>
    <ligand>
        <name>Mn(2+)</name>
        <dbReference type="ChEBI" id="CHEBI:29035"/>
        <label>2</label>
    </ligand>
</feature>
<organism>
    <name type="scientific">Staphylococcus aureus (strain Mu50 / ATCC 700699)</name>
    <dbReference type="NCBI Taxonomy" id="158878"/>
    <lineage>
        <taxon>Bacteria</taxon>
        <taxon>Bacillati</taxon>
        <taxon>Bacillota</taxon>
        <taxon>Bacilli</taxon>
        <taxon>Bacillales</taxon>
        <taxon>Staphylococcaceae</taxon>
        <taxon>Staphylococcus</taxon>
    </lineage>
</organism>
<reference key="1">
    <citation type="journal article" date="2001" name="Lancet">
        <title>Whole genome sequencing of meticillin-resistant Staphylococcus aureus.</title>
        <authorList>
            <person name="Kuroda M."/>
            <person name="Ohta T."/>
            <person name="Uchiyama I."/>
            <person name="Baba T."/>
            <person name="Yuzawa H."/>
            <person name="Kobayashi I."/>
            <person name="Cui L."/>
            <person name="Oguchi A."/>
            <person name="Aoki K."/>
            <person name="Nagai Y."/>
            <person name="Lian J.-Q."/>
            <person name="Ito T."/>
            <person name="Kanamori M."/>
            <person name="Matsumaru H."/>
            <person name="Maruyama A."/>
            <person name="Murakami H."/>
            <person name="Hosoyama A."/>
            <person name="Mizutani-Ui Y."/>
            <person name="Takahashi N.K."/>
            <person name="Sawano T."/>
            <person name="Inoue R."/>
            <person name="Kaito C."/>
            <person name="Sekimizu K."/>
            <person name="Hirakawa H."/>
            <person name="Kuhara S."/>
            <person name="Goto S."/>
            <person name="Yabuzaki J."/>
            <person name="Kanehisa M."/>
            <person name="Yamashita A."/>
            <person name="Oshima K."/>
            <person name="Furuya K."/>
            <person name="Yoshino C."/>
            <person name="Shiba T."/>
            <person name="Hattori M."/>
            <person name="Ogasawara N."/>
            <person name="Hayashi H."/>
            <person name="Hiramatsu K."/>
        </authorList>
    </citation>
    <scope>NUCLEOTIDE SEQUENCE [LARGE SCALE GENOMIC DNA]</scope>
    <source>
        <strain>Mu50 / ATCC 700699</strain>
    </source>
</reference>
<accession>Q99TF5</accession>
<name>Y1708_STAAM</name>